<dbReference type="EMBL" id="CP000266">
    <property type="protein sequence ID" value="ABF03813.1"/>
    <property type="molecule type" value="Genomic_DNA"/>
</dbReference>
<dbReference type="RefSeq" id="WP_000217950.1">
    <property type="nucleotide sequence ID" value="NC_008258.1"/>
</dbReference>
<dbReference type="SMR" id="Q0T4F2"/>
<dbReference type="GeneID" id="93775777"/>
<dbReference type="KEGG" id="sfv:SFV_1642"/>
<dbReference type="HOGENOM" id="CLU_190629_0_0_6"/>
<dbReference type="Proteomes" id="UP000000659">
    <property type="component" value="Chromosome"/>
</dbReference>
<dbReference type="GO" id="GO:0003677">
    <property type="term" value="F:DNA binding"/>
    <property type="evidence" value="ECO:0007669"/>
    <property type="project" value="UniProtKB-KW"/>
</dbReference>
<dbReference type="FunFam" id="1.20.1280.40:FF:000002">
    <property type="entry name" value="OriC-binding nucleoid-associated protein"/>
    <property type="match status" value="1"/>
</dbReference>
<dbReference type="Gene3D" id="1.20.1280.40">
    <property type="entry name" value="HHA"/>
    <property type="match status" value="1"/>
</dbReference>
<dbReference type="InterPro" id="IPR007985">
    <property type="entry name" value="Hemolysn_expr_modulating_HHA"/>
</dbReference>
<dbReference type="InterPro" id="IPR036666">
    <property type="entry name" value="HHA_sf"/>
</dbReference>
<dbReference type="NCBIfam" id="NF007703">
    <property type="entry name" value="PRK10391.1"/>
    <property type="match status" value="1"/>
</dbReference>
<dbReference type="Pfam" id="PF05321">
    <property type="entry name" value="HHA"/>
    <property type="match status" value="1"/>
</dbReference>
<dbReference type="SUPFAM" id="SSF68989">
    <property type="entry name" value="Hemolysin expression modulating protein HHA"/>
    <property type="match status" value="1"/>
</dbReference>
<accession>Q0T4F2</accession>
<keyword id="KW-0238">DNA-binding</keyword>
<keyword id="KW-0804">Transcription</keyword>
<keyword id="KW-0805">Transcription regulation</keyword>
<gene>
    <name type="primary">cnu</name>
    <name type="synonym">ydgT</name>
    <name type="ordered locus">SFV_1642</name>
</gene>
<reference key="1">
    <citation type="journal article" date="2006" name="BMC Genomics">
        <title>Complete genome sequence of Shigella flexneri 5b and comparison with Shigella flexneri 2a.</title>
        <authorList>
            <person name="Nie H."/>
            <person name="Yang F."/>
            <person name="Zhang X."/>
            <person name="Yang J."/>
            <person name="Chen L."/>
            <person name="Wang J."/>
            <person name="Xiong Z."/>
            <person name="Peng J."/>
            <person name="Sun L."/>
            <person name="Dong J."/>
            <person name="Xue Y."/>
            <person name="Xu X."/>
            <person name="Chen S."/>
            <person name="Yao Z."/>
            <person name="Shen Y."/>
            <person name="Jin Q."/>
        </authorList>
    </citation>
    <scope>NUCLEOTIDE SEQUENCE [LARGE SCALE GENOMIC DNA]</scope>
    <source>
        <strain>8401</strain>
    </source>
</reference>
<name>CNU_SHIF8</name>
<sequence length="71" mass="8417">MTVQDYLLKFRKISSLESLEKLYDHLNYTLTDDQELINMYRAADHRRAELVSGGRLFDLGQVPKSVWHYVQ</sequence>
<protein>
    <recommendedName>
        <fullName>OriC-binding nucleoid-associated protein</fullName>
    </recommendedName>
    <alternativeName>
        <fullName>H-NS/StpA-binding protein 2</fullName>
    </alternativeName>
    <alternativeName>
        <fullName>Transcription modulator YdgT</fullName>
    </alternativeName>
</protein>
<comment type="function">
    <text evidence="2">Modifies the set of genes regulated by H-NS; Hha and cnu (YdgT) increase the number of genes bound by H-NS/StpA and may also modulate the oligomerization of the H-NS/StpA-complex on DNA. The complex formed with H-NS binds to the specific 26-bp cnb site in the origin of replication oriC.</text>
</comment>
<comment type="subunit">
    <text evidence="2">Forms complexes with both H-NS and StpA.</text>
</comment>
<comment type="similarity">
    <text evidence="3">Belongs to the Hha/YmoA/Cnu family.</text>
</comment>
<feature type="chain" id="PRO_0000305054" description="OriC-binding nucleoid-associated protein">
    <location>
        <begin position="1"/>
        <end position="71"/>
    </location>
</feature>
<feature type="site" description="Interacts with H-NS" evidence="1">
    <location>
        <position position="44"/>
    </location>
</feature>
<evidence type="ECO:0000250" key="1"/>
<evidence type="ECO:0000250" key="2">
    <source>
        <dbReference type="UniProtKB" id="P64467"/>
    </source>
</evidence>
<evidence type="ECO:0000305" key="3"/>
<proteinExistence type="inferred from homology"/>
<organism>
    <name type="scientific">Shigella flexneri serotype 5b (strain 8401)</name>
    <dbReference type="NCBI Taxonomy" id="373384"/>
    <lineage>
        <taxon>Bacteria</taxon>
        <taxon>Pseudomonadati</taxon>
        <taxon>Pseudomonadota</taxon>
        <taxon>Gammaproteobacteria</taxon>
        <taxon>Enterobacterales</taxon>
        <taxon>Enterobacteriaceae</taxon>
        <taxon>Shigella</taxon>
    </lineage>
</organism>